<name>RT34_MOUSE</name>
<accession>Q9JIK9</accession>
<accession>Q9D2B0</accession>
<accession>Q9D957</accession>
<comment type="function">
    <text evidence="1">Required for mitochondrial translation, plays a role in maintaining the stability of the small ribosomal subunit and the 12S rRNA that are required for mitoribosome formation.</text>
</comment>
<comment type="subunit">
    <text>Component of the mitochondrial ribosome small subunit (28S) which comprises a 12S rRNA and about 30 distinct proteins.</text>
</comment>
<comment type="subcellular location">
    <subcellularLocation>
        <location evidence="1">Mitochondrion</location>
    </subcellularLocation>
</comment>
<comment type="tissue specificity">
    <text evidence="1">Widely expressed (at protein liver).</text>
</comment>
<comment type="similarity">
    <text evidence="2">Belongs to the mitochondrion-specific ribosomal protein mS34 family.</text>
</comment>
<evidence type="ECO:0000269" key="1">
    <source>
    </source>
</evidence>
<evidence type="ECO:0000305" key="2"/>
<gene>
    <name type="primary">Mrps34</name>
    <name type="synonym">Tce2</name>
</gene>
<keyword id="KW-0002">3D-structure</keyword>
<keyword id="KW-0496">Mitochondrion</keyword>
<keyword id="KW-1185">Reference proteome</keyword>
<keyword id="KW-0687">Ribonucleoprotein</keyword>
<keyword id="KW-0689">Ribosomal protein</keyword>
<proteinExistence type="evidence at protein level"/>
<reference key="1">
    <citation type="journal article" date="2000" name="Genome Res.">
        <title>Eleven densely clustered genes, six of them novel, in 176 kb of mouse T-complex DNA.</title>
        <authorList>
            <person name="Kargul G.J."/>
            <person name="Nagaraja R."/>
            <person name="Shimada T."/>
            <person name="Grahovac M.J."/>
            <person name="Lim M.K."/>
            <person name="Nakashima H."/>
            <person name="Waeltz P."/>
            <person name="Ma P."/>
            <person name="Chen E."/>
            <person name="Schlessinger D."/>
            <person name="Ko M.S.H."/>
        </authorList>
    </citation>
    <scope>NUCLEOTIDE SEQUENCE [GENOMIC DNA]</scope>
    <source>
        <strain>129/SvJ</strain>
    </source>
</reference>
<reference key="2">
    <citation type="journal article" date="2005" name="Science">
        <title>The transcriptional landscape of the mammalian genome.</title>
        <authorList>
            <person name="Carninci P."/>
            <person name="Kasukawa T."/>
            <person name="Katayama S."/>
            <person name="Gough J."/>
            <person name="Frith M.C."/>
            <person name="Maeda N."/>
            <person name="Oyama R."/>
            <person name="Ravasi T."/>
            <person name="Lenhard B."/>
            <person name="Wells C."/>
            <person name="Kodzius R."/>
            <person name="Shimokawa K."/>
            <person name="Bajic V.B."/>
            <person name="Brenner S.E."/>
            <person name="Batalov S."/>
            <person name="Forrest A.R."/>
            <person name="Zavolan M."/>
            <person name="Davis M.J."/>
            <person name="Wilming L.G."/>
            <person name="Aidinis V."/>
            <person name="Allen J.E."/>
            <person name="Ambesi-Impiombato A."/>
            <person name="Apweiler R."/>
            <person name="Aturaliya R.N."/>
            <person name="Bailey T.L."/>
            <person name="Bansal M."/>
            <person name="Baxter L."/>
            <person name="Beisel K.W."/>
            <person name="Bersano T."/>
            <person name="Bono H."/>
            <person name="Chalk A.M."/>
            <person name="Chiu K.P."/>
            <person name="Choudhary V."/>
            <person name="Christoffels A."/>
            <person name="Clutterbuck D.R."/>
            <person name="Crowe M.L."/>
            <person name="Dalla E."/>
            <person name="Dalrymple B.P."/>
            <person name="de Bono B."/>
            <person name="Della Gatta G."/>
            <person name="di Bernardo D."/>
            <person name="Down T."/>
            <person name="Engstrom P."/>
            <person name="Fagiolini M."/>
            <person name="Faulkner G."/>
            <person name="Fletcher C.F."/>
            <person name="Fukushima T."/>
            <person name="Furuno M."/>
            <person name="Futaki S."/>
            <person name="Gariboldi M."/>
            <person name="Georgii-Hemming P."/>
            <person name="Gingeras T.R."/>
            <person name="Gojobori T."/>
            <person name="Green R.E."/>
            <person name="Gustincich S."/>
            <person name="Harbers M."/>
            <person name="Hayashi Y."/>
            <person name="Hensch T.K."/>
            <person name="Hirokawa N."/>
            <person name="Hill D."/>
            <person name="Huminiecki L."/>
            <person name="Iacono M."/>
            <person name="Ikeo K."/>
            <person name="Iwama A."/>
            <person name="Ishikawa T."/>
            <person name="Jakt M."/>
            <person name="Kanapin A."/>
            <person name="Katoh M."/>
            <person name="Kawasawa Y."/>
            <person name="Kelso J."/>
            <person name="Kitamura H."/>
            <person name="Kitano H."/>
            <person name="Kollias G."/>
            <person name="Krishnan S.P."/>
            <person name="Kruger A."/>
            <person name="Kummerfeld S.K."/>
            <person name="Kurochkin I.V."/>
            <person name="Lareau L.F."/>
            <person name="Lazarevic D."/>
            <person name="Lipovich L."/>
            <person name="Liu J."/>
            <person name="Liuni S."/>
            <person name="McWilliam S."/>
            <person name="Madan Babu M."/>
            <person name="Madera M."/>
            <person name="Marchionni L."/>
            <person name="Matsuda H."/>
            <person name="Matsuzawa S."/>
            <person name="Miki H."/>
            <person name="Mignone F."/>
            <person name="Miyake S."/>
            <person name="Morris K."/>
            <person name="Mottagui-Tabar S."/>
            <person name="Mulder N."/>
            <person name="Nakano N."/>
            <person name="Nakauchi H."/>
            <person name="Ng P."/>
            <person name="Nilsson R."/>
            <person name="Nishiguchi S."/>
            <person name="Nishikawa S."/>
            <person name="Nori F."/>
            <person name="Ohara O."/>
            <person name="Okazaki Y."/>
            <person name="Orlando V."/>
            <person name="Pang K.C."/>
            <person name="Pavan W.J."/>
            <person name="Pavesi G."/>
            <person name="Pesole G."/>
            <person name="Petrovsky N."/>
            <person name="Piazza S."/>
            <person name="Reed J."/>
            <person name="Reid J.F."/>
            <person name="Ring B.Z."/>
            <person name="Ringwald M."/>
            <person name="Rost B."/>
            <person name="Ruan Y."/>
            <person name="Salzberg S.L."/>
            <person name="Sandelin A."/>
            <person name="Schneider C."/>
            <person name="Schoenbach C."/>
            <person name="Sekiguchi K."/>
            <person name="Semple C.A."/>
            <person name="Seno S."/>
            <person name="Sessa L."/>
            <person name="Sheng Y."/>
            <person name="Shibata Y."/>
            <person name="Shimada H."/>
            <person name="Shimada K."/>
            <person name="Silva D."/>
            <person name="Sinclair B."/>
            <person name="Sperling S."/>
            <person name="Stupka E."/>
            <person name="Sugiura K."/>
            <person name="Sultana R."/>
            <person name="Takenaka Y."/>
            <person name="Taki K."/>
            <person name="Tammoja K."/>
            <person name="Tan S.L."/>
            <person name="Tang S."/>
            <person name="Taylor M.S."/>
            <person name="Tegner J."/>
            <person name="Teichmann S.A."/>
            <person name="Ueda H.R."/>
            <person name="van Nimwegen E."/>
            <person name="Verardo R."/>
            <person name="Wei C.L."/>
            <person name="Yagi K."/>
            <person name="Yamanishi H."/>
            <person name="Zabarovsky E."/>
            <person name="Zhu S."/>
            <person name="Zimmer A."/>
            <person name="Hide W."/>
            <person name="Bult C."/>
            <person name="Grimmond S.M."/>
            <person name="Teasdale R.D."/>
            <person name="Liu E.T."/>
            <person name="Brusic V."/>
            <person name="Quackenbush J."/>
            <person name="Wahlestedt C."/>
            <person name="Mattick J.S."/>
            <person name="Hume D.A."/>
            <person name="Kai C."/>
            <person name="Sasaki D."/>
            <person name="Tomaru Y."/>
            <person name="Fukuda S."/>
            <person name="Kanamori-Katayama M."/>
            <person name="Suzuki M."/>
            <person name="Aoki J."/>
            <person name="Arakawa T."/>
            <person name="Iida J."/>
            <person name="Imamura K."/>
            <person name="Itoh M."/>
            <person name="Kato T."/>
            <person name="Kawaji H."/>
            <person name="Kawagashira N."/>
            <person name="Kawashima T."/>
            <person name="Kojima M."/>
            <person name="Kondo S."/>
            <person name="Konno H."/>
            <person name="Nakano K."/>
            <person name="Ninomiya N."/>
            <person name="Nishio T."/>
            <person name="Okada M."/>
            <person name="Plessy C."/>
            <person name="Shibata K."/>
            <person name="Shiraki T."/>
            <person name="Suzuki S."/>
            <person name="Tagami M."/>
            <person name="Waki K."/>
            <person name="Watahiki A."/>
            <person name="Okamura-Oho Y."/>
            <person name="Suzuki H."/>
            <person name="Kawai J."/>
            <person name="Hayashizaki Y."/>
        </authorList>
    </citation>
    <scope>NUCLEOTIDE SEQUENCE [LARGE SCALE MRNA]</scope>
    <source>
        <strain>C57BL/6J</strain>
        <tissue>Embryo</tissue>
        <tissue>Kidney</tissue>
        <tissue>Pancreas</tissue>
        <tissue>Pituitary</tissue>
    </source>
</reference>
<reference key="3">
    <citation type="journal article" date="2004" name="Genome Res.">
        <title>The status, quality, and expansion of the NIH full-length cDNA project: the Mammalian Gene Collection (MGC).</title>
        <authorList>
            <consortium name="The MGC Project Team"/>
        </authorList>
    </citation>
    <scope>NUCLEOTIDE SEQUENCE [LARGE SCALE MRNA]</scope>
    <source>
        <tissue>Colon</tissue>
    </source>
</reference>
<reference key="4">
    <citation type="journal article" date="2010" name="Cell">
        <title>A tissue-specific atlas of mouse protein phosphorylation and expression.</title>
        <authorList>
            <person name="Huttlin E.L."/>
            <person name="Jedrychowski M.P."/>
            <person name="Elias J.E."/>
            <person name="Goswami T."/>
            <person name="Rad R."/>
            <person name="Beausoleil S.A."/>
            <person name="Villen J."/>
            <person name="Haas W."/>
            <person name="Sowa M.E."/>
            <person name="Gygi S.P."/>
        </authorList>
    </citation>
    <scope>IDENTIFICATION BY MASS SPECTROMETRY [LARGE SCALE ANALYSIS]</scope>
    <source>
        <tissue>Brain</tissue>
        <tissue>Brown adipose tissue</tissue>
        <tissue>Heart</tissue>
        <tissue>Kidney</tissue>
        <tissue>Liver</tissue>
        <tissue>Lung</tissue>
        <tissue>Spleen</tissue>
        <tissue>Testis</tissue>
    </source>
</reference>
<reference key="5">
    <citation type="journal article" date="2015" name="PLoS Genet.">
        <title>Mutation in MRPS34 compromises protein synthesis and causes mitochondrial dysfunction.</title>
        <authorList>
            <person name="Richman T.R."/>
            <person name="Ermer J.A."/>
            <person name="Davies S.M."/>
            <person name="Perks K.L."/>
            <person name="Viola H.M."/>
            <person name="Shearwood A.M."/>
            <person name="Hool L.C."/>
            <person name="Rackham O."/>
            <person name="Filipovska A."/>
        </authorList>
    </citation>
    <scope>FUNCTION</scope>
    <scope>MUTAGENESIS OF LEU-68</scope>
    <scope>SUBCELLULAR LOCATION</scope>
    <scope>TISSUE SPECIFICITY</scope>
</reference>
<organism>
    <name type="scientific">Mus musculus</name>
    <name type="common">Mouse</name>
    <dbReference type="NCBI Taxonomy" id="10090"/>
    <lineage>
        <taxon>Eukaryota</taxon>
        <taxon>Metazoa</taxon>
        <taxon>Chordata</taxon>
        <taxon>Craniata</taxon>
        <taxon>Vertebrata</taxon>
        <taxon>Euteleostomi</taxon>
        <taxon>Mammalia</taxon>
        <taxon>Eutheria</taxon>
        <taxon>Euarchontoglires</taxon>
        <taxon>Glires</taxon>
        <taxon>Rodentia</taxon>
        <taxon>Myomorpha</taxon>
        <taxon>Muroidea</taxon>
        <taxon>Muridae</taxon>
        <taxon>Murinae</taxon>
        <taxon>Mus</taxon>
        <taxon>Mus</taxon>
    </lineage>
</organism>
<dbReference type="EMBL" id="AF220294">
    <property type="protein sequence ID" value="AAF69478.1"/>
    <property type="molecule type" value="Genomic_DNA"/>
</dbReference>
<dbReference type="EMBL" id="AK002285">
    <property type="protein sequence ID" value="BAB21988.1"/>
    <property type="molecule type" value="mRNA"/>
</dbReference>
<dbReference type="EMBL" id="AK004049">
    <property type="protein sequence ID" value="BAB23142.1"/>
    <property type="molecule type" value="mRNA"/>
</dbReference>
<dbReference type="EMBL" id="AK007337">
    <property type="protein sequence ID" value="BAB24970.1"/>
    <property type="molecule type" value="mRNA"/>
</dbReference>
<dbReference type="EMBL" id="AK019922">
    <property type="status" value="NOT_ANNOTATED_CDS"/>
    <property type="molecule type" value="mRNA"/>
</dbReference>
<dbReference type="EMBL" id="BC024336">
    <property type="protein sequence ID" value="AAH24336.1"/>
    <property type="molecule type" value="mRNA"/>
</dbReference>
<dbReference type="CCDS" id="CCDS28502.1"/>
<dbReference type="RefSeq" id="NP_075749.1">
    <property type="nucleotide sequence ID" value="NM_023260.2"/>
</dbReference>
<dbReference type="PDB" id="7PNT">
    <property type="method" value="EM"/>
    <property type="resolution" value="3.19 A"/>
    <property type="chains" value="0=1-218"/>
</dbReference>
<dbReference type="PDB" id="7PNU">
    <property type="method" value="EM"/>
    <property type="resolution" value="3.06 A"/>
    <property type="chains" value="0=1-218"/>
</dbReference>
<dbReference type="PDB" id="7PNV">
    <property type="method" value="EM"/>
    <property type="resolution" value="3.06 A"/>
    <property type="chains" value="0=1-218"/>
</dbReference>
<dbReference type="PDB" id="7PNW">
    <property type="method" value="EM"/>
    <property type="resolution" value="3.09 A"/>
    <property type="chains" value="0=1-218"/>
</dbReference>
<dbReference type="PDBsum" id="7PNT"/>
<dbReference type="PDBsum" id="7PNU"/>
<dbReference type="PDBsum" id="7PNV"/>
<dbReference type="PDBsum" id="7PNW"/>
<dbReference type="EMDB" id="EMD-13551"/>
<dbReference type="EMDB" id="EMD-13552"/>
<dbReference type="EMDB" id="EMD-13553"/>
<dbReference type="EMDB" id="EMD-13554"/>
<dbReference type="SMR" id="Q9JIK9"/>
<dbReference type="BioGRID" id="219729">
    <property type="interactions" value="6"/>
</dbReference>
<dbReference type="ComplexPortal" id="CPX-5301">
    <property type="entry name" value="28S mitochondrial small ribosomal subunit"/>
</dbReference>
<dbReference type="FunCoup" id="Q9JIK9">
    <property type="interactions" value="693"/>
</dbReference>
<dbReference type="STRING" id="10090.ENSMUSP00000045111"/>
<dbReference type="iPTMnet" id="Q9JIK9"/>
<dbReference type="PhosphoSitePlus" id="Q9JIK9"/>
<dbReference type="SwissPalm" id="Q9JIK9"/>
<dbReference type="jPOST" id="Q9JIK9"/>
<dbReference type="PaxDb" id="10090-ENSMUSP00000045111"/>
<dbReference type="PeptideAtlas" id="Q9JIK9"/>
<dbReference type="ProteomicsDB" id="260863"/>
<dbReference type="Pumba" id="Q9JIK9"/>
<dbReference type="Antibodypedia" id="23234">
    <property type="antibodies" value="313 antibodies from 27 providers"/>
</dbReference>
<dbReference type="DNASU" id="79044"/>
<dbReference type="Ensembl" id="ENSMUST00000043907.14">
    <property type="protein sequence ID" value="ENSMUSP00000045111.8"/>
    <property type="gene ID" value="ENSMUSG00000038880.14"/>
</dbReference>
<dbReference type="Ensembl" id="ENSMUST00000154236.2">
    <property type="protein sequence ID" value="ENSMUSP00000120985.2"/>
    <property type="gene ID" value="ENSMUSG00000038880.14"/>
</dbReference>
<dbReference type="GeneID" id="79044"/>
<dbReference type="KEGG" id="mmu:79044"/>
<dbReference type="UCSC" id="uc008ayy.1">
    <property type="organism name" value="mouse"/>
</dbReference>
<dbReference type="AGR" id="MGI:1930188"/>
<dbReference type="CTD" id="65993"/>
<dbReference type="MGI" id="MGI:1930188">
    <property type="gene designation" value="Mrps34"/>
</dbReference>
<dbReference type="VEuPathDB" id="HostDB:ENSMUSG00000038880"/>
<dbReference type="eggNOG" id="ENOG502QSI0">
    <property type="taxonomic scope" value="Eukaryota"/>
</dbReference>
<dbReference type="GeneTree" id="ENSGT00390000008964"/>
<dbReference type="HOGENOM" id="CLU_116794_0_0_1"/>
<dbReference type="InParanoid" id="Q9JIK9"/>
<dbReference type="OMA" id="HMEQQFK"/>
<dbReference type="OrthoDB" id="16434at2759"/>
<dbReference type="PhylomeDB" id="Q9JIK9"/>
<dbReference type="TreeFam" id="TF320386"/>
<dbReference type="Reactome" id="R-MMU-5389840">
    <property type="pathway name" value="Mitochondrial translation elongation"/>
</dbReference>
<dbReference type="Reactome" id="R-MMU-5419276">
    <property type="pathway name" value="Mitochondrial translation termination"/>
</dbReference>
<dbReference type="BioGRID-ORCS" id="79044">
    <property type="hits" value="25 hits in 80 CRISPR screens"/>
</dbReference>
<dbReference type="ChiTaRS" id="Mrps34">
    <property type="organism name" value="mouse"/>
</dbReference>
<dbReference type="PRO" id="PR:Q9JIK9"/>
<dbReference type="Proteomes" id="UP000000589">
    <property type="component" value="Chromosome 17"/>
</dbReference>
<dbReference type="RNAct" id="Q9JIK9">
    <property type="molecule type" value="protein"/>
</dbReference>
<dbReference type="Bgee" id="ENSMUSG00000038880">
    <property type="expression patterns" value="Expressed in proximal tubule and 132 other cell types or tissues"/>
</dbReference>
<dbReference type="GO" id="GO:0005743">
    <property type="term" value="C:mitochondrial inner membrane"/>
    <property type="evidence" value="ECO:0000303"/>
    <property type="project" value="ComplexPortal"/>
</dbReference>
<dbReference type="GO" id="GO:0005763">
    <property type="term" value="C:mitochondrial small ribosomal subunit"/>
    <property type="evidence" value="ECO:0000250"/>
    <property type="project" value="UniProtKB"/>
</dbReference>
<dbReference type="GO" id="GO:0005739">
    <property type="term" value="C:mitochondrion"/>
    <property type="evidence" value="ECO:0000314"/>
    <property type="project" value="UniProtKB"/>
</dbReference>
<dbReference type="GO" id="GO:0003735">
    <property type="term" value="F:structural constituent of ribosome"/>
    <property type="evidence" value="ECO:0007669"/>
    <property type="project" value="Ensembl"/>
</dbReference>
<dbReference type="GO" id="GO:0032543">
    <property type="term" value="P:mitochondrial translation"/>
    <property type="evidence" value="ECO:0000315"/>
    <property type="project" value="UniProtKB"/>
</dbReference>
<dbReference type="InterPro" id="IPR032053">
    <property type="entry name" value="Ribosomal_mS34"/>
</dbReference>
<dbReference type="PANTHER" id="PTHR28589">
    <property type="entry name" value="28S RIBOSOMAL PROTEIN S34, MITOCHONDRIAL"/>
    <property type="match status" value="1"/>
</dbReference>
<dbReference type="PANTHER" id="PTHR28589:SF1">
    <property type="entry name" value="SMALL RIBOSOMAL SUBUNIT PROTEIN MS34"/>
    <property type="match status" value="1"/>
</dbReference>
<dbReference type="Pfam" id="PF16053">
    <property type="entry name" value="MRP-S34"/>
    <property type="match status" value="1"/>
</dbReference>
<sequence>MARKKVRPRLIAELARRVRALREQRNQPRDSQLYALDYETLTRPHSGRRLPVRAWADVRRESRLLQLLARLPLFGLGRLVTRKSWLWQHDEPCYWRLTRVRPDYTAQNLDHGRAWGILTFKGKSEDTAREIEQVMYHDWRLVPKHEEEAFTAFTAKPEDRLNSVPYPPLLRAMILAERQKNGDTSVQEPLLNLERTRMRPWDYPAKQETKGRAKGTPV</sequence>
<feature type="chain" id="PRO_0000087731" description="Small ribosomal subunit protein mS34">
    <location>
        <begin position="1"/>
        <end position="218"/>
    </location>
</feature>
<feature type="mutagenesis site" description="Decreases protein expression. Decreases mitochondrial ribosomal subunits and translationally competent mitoribosomes. Mutant mice show heart hypertrophy and liver steatosis." evidence="1">
    <original>L</original>
    <variation>P</variation>
    <location>
        <position position="68"/>
    </location>
</feature>
<feature type="sequence conflict" description="In Ref. 2; BAB24970." evidence="2" ref="2">
    <original>K</original>
    <variation>E</variation>
    <location>
        <position position="5"/>
    </location>
</feature>
<protein>
    <recommendedName>
        <fullName evidence="2">Small ribosomal subunit protein mS34</fullName>
    </recommendedName>
    <alternativeName>
        <fullName>28S ribosomal protein S34, mitochondrial</fullName>
        <shortName>MRP-S34</shortName>
        <shortName>S34mt</shortName>
    </alternativeName>
    <alternativeName>
        <fullName>T-complex expressed gene 2 protein</fullName>
    </alternativeName>
</protein>